<feature type="chain" id="PRO_1000048650" description="Chromosomal replication initiator protein DnaA">
    <location>
        <begin position="1"/>
        <end position="450"/>
    </location>
</feature>
<feature type="region of interest" description="Domain I, interacts with DnaA modulators" evidence="1">
    <location>
        <begin position="1"/>
        <end position="84"/>
    </location>
</feature>
<feature type="region of interest" description="Domain II" evidence="1">
    <location>
        <begin position="84"/>
        <end position="111"/>
    </location>
</feature>
<feature type="region of interest" description="Domain III, AAA+ region" evidence="1">
    <location>
        <begin position="112"/>
        <end position="328"/>
    </location>
</feature>
<feature type="region of interest" description="Domain IV, binds dsDNA" evidence="1">
    <location>
        <begin position="329"/>
        <end position="450"/>
    </location>
</feature>
<feature type="binding site" evidence="1">
    <location>
        <position position="156"/>
    </location>
    <ligand>
        <name>ATP</name>
        <dbReference type="ChEBI" id="CHEBI:30616"/>
    </ligand>
</feature>
<feature type="binding site" evidence="1">
    <location>
        <position position="158"/>
    </location>
    <ligand>
        <name>ATP</name>
        <dbReference type="ChEBI" id="CHEBI:30616"/>
    </ligand>
</feature>
<feature type="binding site" evidence="1">
    <location>
        <position position="159"/>
    </location>
    <ligand>
        <name>ATP</name>
        <dbReference type="ChEBI" id="CHEBI:30616"/>
    </ligand>
</feature>
<feature type="binding site" evidence="1">
    <location>
        <position position="160"/>
    </location>
    <ligand>
        <name>ATP</name>
        <dbReference type="ChEBI" id="CHEBI:30616"/>
    </ligand>
</feature>
<reference key="1">
    <citation type="journal article" date="2007" name="Proc. Natl. Acad. Sci. U.S.A.">
        <title>Genome and proteome of long-chain alkane degrading Geobacillus thermodenitrificans NG80-2 isolated from a deep-subsurface oil reservoir.</title>
        <authorList>
            <person name="Feng L."/>
            <person name="Wang W."/>
            <person name="Cheng J."/>
            <person name="Ren Y."/>
            <person name="Zhao G."/>
            <person name="Gao C."/>
            <person name="Tang Y."/>
            <person name="Liu X."/>
            <person name="Han W."/>
            <person name="Peng X."/>
            <person name="Liu R."/>
            <person name="Wang L."/>
        </authorList>
    </citation>
    <scope>NUCLEOTIDE SEQUENCE [LARGE SCALE GENOMIC DNA]</scope>
    <source>
        <strain>NG80-2</strain>
    </source>
</reference>
<evidence type="ECO:0000255" key="1">
    <source>
        <dbReference type="HAMAP-Rule" id="MF_00377"/>
    </source>
</evidence>
<dbReference type="EMBL" id="CP000557">
    <property type="protein sequence ID" value="ABO65388.1"/>
    <property type="molecule type" value="Genomic_DNA"/>
</dbReference>
<dbReference type="RefSeq" id="WP_011886589.1">
    <property type="nucleotide sequence ID" value="NC_009328.1"/>
</dbReference>
<dbReference type="SMR" id="A4IJ84"/>
<dbReference type="GeneID" id="87622455"/>
<dbReference type="KEGG" id="gtn:GTNG_0001"/>
<dbReference type="eggNOG" id="COG0593">
    <property type="taxonomic scope" value="Bacteria"/>
</dbReference>
<dbReference type="HOGENOM" id="CLU_026910_3_1_9"/>
<dbReference type="Proteomes" id="UP000001578">
    <property type="component" value="Chromosome"/>
</dbReference>
<dbReference type="GO" id="GO:0005737">
    <property type="term" value="C:cytoplasm"/>
    <property type="evidence" value="ECO:0007669"/>
    <property type="project" value="UniProtKB-SubCell"/>
</dbReference>
<dbReference type="GO" id="GO:0005886">
    <property type="term" value="C:plasma membrane"/>
    <property type="evidence" value="ECO:0007669"/>
    <property type="project" value="TreeGrafter"/>
</dbReference>
<dbReference type="GO" id="GO:0005524">
    <property type="term" value="F:ATP binding"/>
    <property type="evidence" value="ECO:0007669"/>
    <property type="project" value="UniProtKB-UniRule"/>
</dbReference>
<dbReference type="GO" id="GO:0016887">
    <property type="term" value="F:ATP hydrolysis activity"/>
    <property type="evidence" value="ECO:0007669"/>
    <property type="project" value="InterPro"/>
</dbReference>
<dbReference type="GO" id="GO:0003688">
    <property type="term" value="F:DNA replication origin binding"/>
    <property type="evidence" value="ECO:0007669"/>
    <property type="project" value="UniProtKB-UniRule"/>
</dbReference>
<dbReference type="GO" id="GO:0008289">
    <property type="term" value="F:lipid binding"/>
    <property type="evidence" value="ECO:0007669"/>
    <property type="project" value="UniProtKB-KW"/>
</dbReference>
<dbReference type="GO" id="GO:0006270">
    <property type="term" value="P:DNA replication initiation"/>
    <property type="evidence" value="ECO:0007669"/>
    <property type="project" value="UniProtKB-UniRule"/>
</dbReference>
<dbReference type="GO" id="GO:0006275">
    <property type="term" value="P:regulation of DNA replication"/>
    <property type="evidence" value="ECO:0007669"/>
    <property type="project" value="UniProtKB-UniRule"/>
</dbReference>
<dbReference type="CDD" id="cd00009">
    <property type="entry name" value="AAA"/>
    <property type="match status" value="1"/>
</dbReference>
<dbReference type="CDD" id="cd06571">
    <property type="entry name" value="Bac_DnaA_C"/>
    <property type="match status" value="1"/>
</dbReference>
<dbReference type="FunFam" id="1.10.1750.10:FF:000003">
    <property type="entry name" value="Chromosomal replication initiator protein DnaA"/>
    <property type="match status" value="1"/>
</dbReference>
<dbReference type="FunFam" id="1.10.8.60:FF:000003">
    <property type="entry name" value="Chromosomal replication initiator protein DnaA"/>
    <property type="match status" value="1"/>
</dbReference>
<dbReference type="FunFam" id="3.40.50.300:FF:000150">
    <property type="entry name" value="Chromosomal replication initiator protein DnaA"/>
    <property type="match status" value="1"/>
</dbReference>
<dbReference type="Gene3D" id="1.10.1750.10">
    <property type="match status" value="1"/>
</dbReference>
<dbReference type="Gene3D" id="1.10.8.60">
    <property type="match status" value="1"/>
</dbReference>
<dbReference type="Gene3D" id="3.30.300.180">
    <property type="match status" value="1"/>
</dbReference>
<dbReference type="Gene3D" id="3.40.50.300">
    <property type="entry name" value="P-loop containing nucleotide triphosphate hydrolases"/>
    <property type="match status" value="1"/>
</dbReference>
<dbReference type="HAMAP" id="MF_00377">
    <property type="entry name" value="DnaA_bact"/>
    <property type="match status" value="1"/>
</dbReference>
<dbReference type="InterPro" id="IPR003593">
    <property type="entry name" value="AAA+_ATPase"/>
</dbReference>
<dbReference type="InterPro" id="IPR001957">
    <property type="entry name" value="Chromosome_initiator_DnaA"/>
</dbReference>
<dbReference type="InterPro" id="IPR020591">
    <property type="entry name" value="Chromosome_initiator_DnaA-like"/>
</dbReference>
<dbReference type="InterPro" id="IPR018312">
    <property type="entry name" value="Chromosome_initiator_DnaA_CS"/>
</dbReference>
<dbReference type="InterPro" id="IPR013159">
    <property type="entry name" value="DnaA_C"/>
</dbReference>
<dbReference type="InterPro" id="IPR013317">
    <property type="entry name" value="DnaA_dom"/>
</dbReference>
<dbReference type="InterPro" id="IPR024633">
    <property type="entry name" value="DnaA_N_dom"/>
</dbReference>
<dbReference type="InterPro" id="IPR038454">
    <property type="entry name" value="DnaA_N_sf"/>
</dbReference>
<dbReference type="InterPro" id="IPR027417">
    <property type="entry name" value="P-loop_NTPase"/>
</dbReference>
<dbReference type="InterPro" id="IPR010921">
    <property type="entry name" value="Trp_repressor/repl_initiator"/>
</dbReference>
<dbReference type="NCBIfam" id="TIGR00362">
    <property type="entry name" value="DnaA"/>
    <property type="match status" value="1"/>
</dbReference>
<dbReference type="NCBIfam" id="NF010686">
    <property type="entry name" value="PRK14086.1"/>
    <property type="match status" value="1"/>
</dbReference>
<dbReference type="PANTHER" id="PTHR30050">
    <property type="entry name" value="CHROMOSOMAL REPLICATION INITIATOR PROTEIN DNAA"/>
    <property type="match status" value="1"/>
</dbReference>
<dbReference type="PANTHER" id="PTHR30050:SF2">
    <property type="entry name" value="CHROMOSOMAL REPLICATION INITIATOR PROTEIN DNAA"/>
    <property type="match status" value="1"/>
</dbReference>
<dbReference type="Pfam" id="PF00308">
    <property type="entry name" value="Bac_DnaA"/>
    <property type="match status" value="1"/>
</dbReference>
<dbReference type="Pfam" id="PF08299">
    <property type="entry name" value="Bac_DnaA_C"/>
    <property type="match status" value="1"/>
</dbReference>
<dbReference type="Pfam" id="PF11638">
    <property type="entry name" value="DnaA_N"/>
    <property type="match status" value="1"/>
</dbReference>
<dbReference type="PRINTS" id="PR00051">
    <property type="entry name" value="DNAA"/>
</dbReference>
<dbReference type="SMART" id="SM00382">
    <property type="entry name" value="AAA"/>
    <property type="match status" value="1"/>
</dbReference>
<dbReference type="SMART" id="SM00760">
    <property type="entry name" value="Bac_DnaA_C"/>
    <property type="match status" value="1"/>
</dbReference>
<dbReference type="SUPFAM" id="SSF52540">
    <property type="entry name" value="P-loop containing nucleoside triphosphate hydrolases"/>
    <property type="match status" value="1"/>
</dbReference>
<dbReference type="SUPFAM" id="SSF48295">
    <property type="entry name" value="TrpR-like"/>
    <property type="match status" value="1"/>
</dbReference>
<dbReference type="PROSITE" id="PS01008">
    <property type="entry name" value="DNAA"/>
    <property type="match status" value="1"/>
</dbReference>
<protein>
    <recommendedName>
        <fullName evidence="1">Chromosomal replication initiator protein DnaA</fullName>
    </recommendedName>
</protein>
<name>DNAA_GEOTN</name>
<accession>A4IJ84</accession>
<comment type="function">
    <text evidence="1">Plays an essential role in the initiation and regulation of chromosomal replication. ATP-DnaA binds to the origin of replication (oriC) to initiate formation of the DNA replication initiation complex once per cell cycle. Binds the DnaA box (a 9 base pair repeat at the origin) and separates the double-stranded (ds)DNA. Forms a right-handed helical filament on oriC DNA; dsDNA binds to the exterior of the filament while single-stranded (ss)DNA is stabiized in the filament's interior. The ATP-DnaA-oriC complex binds and stabilizes one strand of the AT-rich DNA unwinding element (DUE), permitting loading of DNA polymerase. After initiation quickly degrades to an ADP-DnaA complex that is not apt for DNA replication. Binds acidic phospholipids.</text>
</comment>
<comment type="subunit">
    <text evidence="1">Oligomerizes as a right-handed, spiral filament on DNA at oriC.</text>
</comment>
<comment type="subcellular location">
    <subcellularLocation>
        <location evidence="1">Cytoplasm</location>
    </subcellularLocation>
</comment>
<comment type="domain">
    <text evidence="1">Domain I is involved in oligomerization and binding regulators, domain II is flexibile and of varying length in different bacteria, domain III forms the AAA+ region, while domain IV binds dsDNA.</text>
</comment>
<comment type="similarity">
    <text evidence="1">Belongs to the DnaA family.</text>
</comment>
<keyword id="KW-0067">ATP-binding</keyword>
<keyword id="KW-0963">Cytoplasm</keyword>
<keyword id="KW-0235">DNA replication</keyword>
<keyword id="KW-0238">DNA-binding</keyword>
<keyword id="KW-0446">Lipid-binding</keyword>
<keyword id="KW-0547">Nucleotide-binding</keyword>
<organism>
    <name type="scientific">Geobacillus thermodenitrificans (strain NG80-2)</name>
    <dbReference type="NCBI Taxonomy" id="420246"/>
    <lineage>
        <taxon>Bacteria</taxon>
        <taxon>Bacillati</taxon>
        <taxon>Bacillota</taxon>
        <taxon>Bacilli</taxon>
        <taxon>Bacillales</taxon>
        <taxon>Anoxybacillaceae</taxon>
        <taxon>Geobacillus</taxon>
    </lineage>
</organism>
<gene>
    <name evidence="1" type="primary">dnaA</name>
    <name type="ordered locus">GTNG_0001</name>
</gene>
<proteinExistence type="inferred from homology"/>
<sequence>MENIHDLWDRVLGEIERKISKPSFETWLKSTKAHSLRGDTLVIVAPNEFARDWLDSRYSHLIAETIYAITGEELAVKFIIPPNQADEKLELPSSAKKQRKPYEEANDFPQSMLNPKYTFDTFVIGSGNRFAHAASLAVAEAPAKAYNPLFIYGGVGLGKTHLMHAIGHYVIEHNPSAKVVYLSSEKFTNEFINAIRDNRPDDFRNKYRNVDVLLIDDIQFLAGKEQTQEEFFHTFNTLHEESKQIVISSDRPPKEIPTLEDRLRSRFEWGLITDITPPDLETRIAILRKKAKAEGFDIPNEVMLYIANQIDSNIRELEGALIRVVAYSSLINKEITADLAAEALKDIIPSAKPKVITIQDIQRVVGQHFNIKLEDFKAKKRTKSVAFPRQIAMYLSRELTDCSLPKIGDEFGGRDHTTVIHAHEKISKLLQTDTQLQKHLKEIQEKLKQL</sequence>